<evidence type="ECO:0000250" key="1"/>
<evidence type="ECO:0000256" key="2">
    <source>
        <dbReference type="SAM" id="MobiDB-lite"/>
    </source>
</evidence>
<evidence type="ECO:0000269" key="3">
    <source>
    </source>
</evidence>
<evidence type="ECO:0000305" key="4"/>
<keyword id="KW-0963">Cytoplasm</keyword>
<keyword id="KW-0206">Cytoskeleton</keyword>
<keyword id="KW-0539">Nucleus</keyword>
<keyword id="KW-1185">Reference proteome</keyword>
<keyword id="KW-0677">Repeat</keyword>
<keyword id="KW-0853">WD repeat</keyword>
<name>DCA13_SCHPO</name>
<proteinExistence type="inferred from homology"/>
<organism>
    <name type="scientific">Schizosaccharomyces pombe (strain 972 / ATCC 24843)</name>
    <name type="common">Fission yeast</name>
    <dbReference type="NCBI Taxonomy" id="284812"/>
    <lineage>
        <taxon>Eukaryota</taxon>
        <taxon>Fungi</taxon>
        <taxon>Dikarya</taxon>
        <taxon>Ascomycota</taxon>
        <taxon>Taphrinomycotina</taxon>
        <taxon>Schizosaccharomycetes</taxon>
        <taxon>Schizosaccharomycetales</taxon>
        <taxon>Schizosaccharomycetaceae</taxon>
        <taxon>Schizosaccharomyces</taxon>
    </lineage>
</organism>
<dbReference type="EMBL" id="CU329671">
    <property type="protein sequence ID" value="CAA20111.1"/>
    <property type="molecule type" value="Genomic_DNA"/>
</dbReference>
<dbReference type="PIR" id="T39855">
    <property type="entry name" value="T39855"/>
</dbReference>
<dbReference type="RefSeq" id="NP_595809.1">
    <property type="nucleotide sequence ID" value="NM_001021712.2"/>
</dbReference>
<dbReference type="SMR" id="O74340"/>
<dbReference type="BioGRID" id="277315">
    <property type="interactions" value="7"/>
</dbReference>
<dbReference type="FunCoup" id="O74340">
    <property type="interactions" value="1044"/>
</dbReference>
<dbReference type="STRING" id="284812.O74340"/>
<dbReference type="iPTMnet" id="O74340"/>
<dbReference type="PaxDb" id="4896-SPBC1A4.07c.1"/>
<dbReference type="EnsemblFungi" id="SPBC1A4.07c.1">
    <property type="protein sequence ID" value="SPBC1A4.07c.1:pep"/>
    <property type="gene ID" value="SPBC1A4.07c"/>
</dbReference>
<dbReference type="GeneID" id="2540796"/>
<dbReference type="KEGG" id="spo:2540796"/>
<dbReference type="PomBase" id="SPBC1A4.07c">
    <property type="gene designation" value="sof1"/>
</dbReference>
<dbReference type="VEuPathDB" id="FungiDB:SPBC1A4.07c"/>
<dbReference type="eggNOG" id="KOG0268">
    <property type="taxonomic scope" value="Eukaryota"/>
</dbReference>
<dbReference type="HOGENOM" id="CLU_033999_0_0_1"/>
<dbReference type="InParanoid" id="O74340"/>
<dbReference type="OMA" id="EDHNAYI"/>
<dbReference type="PhylomeDB" id="O74340"/>
<dbReference type="Reactome" id="R-SPO-6791226">
    <property type="pathway name" value="Major pathway of rRNA processing in the nucleolus and cytosol"/>
</dbReference>
<dbReference type="Reactome" id="R-SPO-8951664">
    <property type="pathway name" value="Neddylation"/>
</dbReference>
<dbReference type="PRO" id="PR:O74340"/>
<dbReference type="Proteomes" id="UP000002485">
    <property type="component" value="Chromosome II"/>
</dbReference>
<dbReference type="GO" id="GO:0005737">
    <property type="term" value="C:cytoplasm"/>
    <property type="evidence" value="ECO:0007669"/>
    <property type="project" value="UniProtKB-KW"/>
</dbReference>
<dbReference type="GO" id="GO:0072686">
    <property type="term" value="C:mitotic spindle"/>
    <property type="evidence" value="ECO:0007005"/>
    <property type="project" value="PomBase"/>
</dbReference>
<dbReference type="GO" id="GO:0005730">
    <property type="term" value="C:nucleolus"/>
    <property type="evidence" value="ECO:0007005"/>
    <property type="project" value="PomBase"/>
</dbReference>
<dbReference type="GO" id="GO:0005634">
    <property type="term" value="C:nucleus"/>
    <property type="evidence" value="ECO:0007005"/>
    <property type="project" value="PomBase"/>
</dbReference>
<dbReference type="GO" id="GO:0032040">
    <property type="term" value="C:small-subunit processome"/>
    <property type="evidence" value="ECO:0000314"/>
    <property type="project" value="PomBase"/>
</dbReference>
<dbReference type="GO" id="GO:0030515">
    <property type="term" value="F:snoRNA binding"/>
    <property type="evidence" value="ECO:0000266"/>
    <property type="project" value="PomBase"/>
</dbReference>
<dbReference type="GO" id="GO:0000462">
    <property type="term" value="P:maturation of SSU-rRNA from tricistronic rRNA transcript (SSU-rRNA, 5.8S rRNA, LSU-rRNA)"/>
    <property type="evidence" value="ECO:0000318"/>
    <property type="project" value="GO_Central"/>
</dbReference>
<dbReference type="CDD" id="cd00200">
    <property type="entry name" value="WD40"/>
    <property type="match status" value="1"/>
</dbReference>
<dbReference type="FunFam" id="2.130.10.10:FF:001105">
    <property type="entry name" value="WD40-repeat-containing domain protein"/>
    <property type="match status" value="1"/>
</dbReference>
<dbReference type="Gene3D" id="2.130.10.10">
    <property type="entry name" value="YVTN repeat-like/Quinoprotein amine dehydrogenase"/>
    <property type="match status" value="2"/>
</dbReference>
<dbReference type="InterPro" id="IPR020472">
    <property type="entry name" value="G-protein_beta_WD-40_rep"/>
</dbReference>
<dbReference type="InterPro" id="IPR011047">
    <property type="entry name" value="Quinoprotein_ADH-like_sf"/>
</dbReference>
<dbReference type="InterPro" id="IPR007287">
    <property type="entry name" value="Sof1"/>
</dbReference>
<dbReference type="InterPro" id="IPR015943">
    <property type="entry name" value="WD40/YVTN_repeat-like_dom_sf"/>
</dbReference>
<dbReference type="InterPro" id="IPR001680">
    <property type="entry name" value="WD40_rpt"/>
</dbReference>
<dbReference type="InterPro" id="IPR051733">
    <property type="entry name" value="WD_repeat_DCAF13/WDSOF1"/>
</dbReference>
<dbReference type="PANTHER" id="PTHR22851:SF0">
    <property type="entry name" value="DDB1- AND CUL4-ASSOCIATED FACTOR 13"/>
    <property type="match status" value="1"/>
</dbReference>
<dbReference type="PANTHER" id="PTHR22851">
    <property type="entry name" value="U3 SMALL NUCLEOLAR RNA U3 SNORNA ASSOCIATED PROTEIN"/>
    <property type="match status" value="1"/>
</dbReference>
<dbReference type="Pfam" id="PF04158">
    <property type="entry name" value="Sof1"/>
    <property type="match status" value="1"/>
</dbReference>
<dbReference type="Pfam" id="PF00400">
    <property type="entry name" value="WD40"/>
    <property type="match status" value="4"/>
</dbReference>
<dbReference type="PRINTS" id="PR00320">
    <property type="entry name" value="GPROTEINBRPT"/>
</dbReference>
<dbReference type="SMART" id="SM00320">
    <property type="entry name" value="WD40"/>
    <property type="match status" value="7"/>
</dbReference>
<dbReference type="SUPFAM" id="SSF50998">
    <property type="entry name" value="Quinoprotein alcohol dehydrogenase-like"/>
    <property type="match status" value="1"/>
</dbReference>
<dbReference type="PROSITE" id="PS00678">
    <property type="entry name" value="WD_REPEATS_1"/>
    <property type="match status" value="1"/>
</dbReference>
<dbReference type="PROSITE" id="PS50082">
    <property type="entry name" value="WD_REPEATS_2"/>
    <property type="match status" value="3"/>
</dbReference>
<dbReference type="PROSITE" id="PS50294">
    <property type="entry name" value="WD_REPEATS_REGION"/>
    <property type="match status" value="1"/>
</dbReference>
<comment type="function">
    <text evidence="1">Required for ribosomal RNA processing.</text>
</comment>
<comment type="subunit">
    <text evidence="1">Interacts with snoRNA U3. Component of the ribosomal small subunit (SSU) processome composed of at least 40 protein subunits and snoRNA U3 (By similarity).</text>
</comment>
<comment type="subcellular location">
    <subcellularLocation>
        <location evidence="3">Nucleus</location>
        <location evidence="3">Nucleolus</location>
    </subcellularLocation>
    <subcellularLocation>
        <location evidence="3">Cytoplasm</location>
        <location evidence="3">Cytoskeleton</location>
        <location evidence="3">Spindle</location>
    </subcellularLocation>
</comment>
<comment type="similarity">
    <text evidence="4">Belongs to the WD repeat DCAF13/WDSOF1 family.</text>
</comment>
<protein>
    <recommendedName>
        <fullName>Protein sof1</fullName>
    </recommendedName>
    <alternativeName>
        <fullName>U3 small nucleolar RNA-associated protein sof1</fullName>
        <shortName>U3 snoRNA-associated protein sof1</shortName>
    </alternativeName>
</protein>
<sequence length="436" mass="49995">MKVKTITRGTSLTRLNDQDPVKRNLDPSLHPFERAREYTRALNATKMDRMFAAPFLGQLGRGHQDGVYSLARDTKTLIDCASGSGDGAVKLWDASERCERWTSKAHEGIVRGLVFSNQGDVLSCASDRYVYMLNKQDGKVKRSYLGDSSLLDIDTSKGGDLFATSGENVSIWDYSRDTPVTKFEWGADTLPVVKFNYTETSVLASAGMDRSIVIYDLRTSSPLTKLITKLRTNSISWNPMEAFNFVAGSEDHNLYMYDMRNLKRALHVYKDHVSAVMSVDFSPTGQEFVSGSYDKTIRIYNVREGHSRDVYHTKRMQRVTAVKFSMDAQYIFSGSDDSNVRLWRARASSRASIRSTREENRLKYLDSLRERYKHIPEIRRIARHRHLPTNVKKAAEIKREEINSLKRREENIRRHSKKGAVPYEKERERHVVGIQK</sequence>
<gene>
    <name type="primary">sof1</name>
    <name type="ORF">SPBC1A4.07c</name>
</gene>
<feature type="chain" id="PRO_0000316545" description="Protein sof1">
    <location>
        <begin position="1"/>
        <end position="436"/>
    </location>
</feature>
<feature type="repeat" description="WD 1">
    <location>
        <begin position="62"/>
        <end position="102"/>
    </location>
</feature>
<feature type="repeat" description="WD 2">
    <location>
        <begin position="105"/>
        <end position="143"/>
    </location>
</feature>
<feature type="repeat" description="WD 3">
    <location>
        <begin position="145"/>
        <end position="175"/>
    </location>
</feature>
<feature type="repeat" description="WD 4">
    <location>
        <begin position="176"/>
        <end position="225"/>
    </location>
</feature>
<feature type="repeat" description="WD 5">
    <location>
        <begin position="227"/>
        <end position="267"/>
    </location>
</feature>
<feature type="repeat" description="WD 6">
    <location>
        <begin position="271"/>
        <end position="310"/>
    </location>
</feature>
<feature type="repeat" description="WD 7">
    <location>
        <begin position="314"/>
        <end position="353"/>
    </location>
</feature>
<feature type="region of interest" description="Disordered" evidence="2">
    <location>
        <begin position="411"/>
        <end position="436"/>
    </location>
</feature>
<feature type="compositionally biased region" description="Basic and acidic residues" evidence="2">
    <location>
        <begin position="423"/>
        <end position="436"/>
    </location>
</feature>
<accession>O74340</accession>
<reference key="1">
    <citation type="journal article" date="2002" name="Nature">
        <title>The genome sequence of Schizosaccharomyces pombe.</title>
        <authorList>
            <person name="Wood V."/>
            <person name="Gwilliam R."/>
            <person name="Rajandream M.A."/>
            <person name="Lyne M.H."/>
            <person name="Lyne R."/>
            <person name="Stewart A."/>
            <person name="Sgouros J.G."/>
            <person name="Peat N."/>
            <person name="Hayles J."/>
            <person name="Baker S.G."/>
            <person name="Basham D."/>
            <person name="Bowman S."/>
            <person name="Brooks K."/>
            <person name="Brown D."/>
            <person name="Brown S."/>
            <person name="Chillingworth T."/>
            <person name="Churcher C.M."/>
            <person name="Collins M."/>
            <person name="Connor R."/>
            <person name="Cronin A."/>
            <person name="Davis P."/>
            <person name="Feltwell T."/>
            <person name="Fraser A."/>
            <person name="Gentles S."/>
            <person name="Goble A."/>
            <person name="Hamlin N."/>
            <person name="Harris D.E."/>
            <person name="Hidalgo J."/>
            <person name="Hodgson G."/>
            <person name="Holroyd S."/>
            <person name="Hornsby T."/>
            <person name="Howarth S."/>
            <person name="Huckle E.J."/>
            <person name="Hunt S."/>
            <person name="Jagels K."/>
            <person name="James K.D."/>
            <person name="Jones L."/>
            <person name="Jones M."/>
            <person name="Leather S."/>
            <person name="McDonald S."/>
            <person name="McLean J."/>
            <person name="Mooney P."/>
            <person name="Moule S."/>
            <person name="Mungall K.L."/>
            <person name="Murphy L.D."/>
            <person name="Niblett D."/>
            <person name="Odell C."/>
            <person name="Oliver K."/>
            <person name="O'Neil S."/>
            <person name="Pearson D."/>
            <person name="Quail M.A."/>
            <person name="Rabbinowitsch E."/>
            <person name="Rutherford K.M."/>
            <person name="Rutter S."/>
            <person name="Saunders D."/>
            <person name="Seeger K."/>
            <person name="Sharp S."/>
            <person name="Skelton J."/>
            <person name="Simmonds M.N."/>
            <person name="Squares R."/>
            <person name="Squares S."/>
            <person name="Stevens K."/>
            <person name="Taylor K."/>
            <person name="Taylor R.G."/>
            <person name="Tivey A."/>
            <person name="Walsh S.V."/>
            <person name="Warren T."/>
            <person name="Whitehead S."/>
            <person name="Woodward J.R."/>
            <person name="Volckaert G."/>
            <person name="Aert R."/>
            <person name="Robben J."/>
            <person name="Grymonprez B."/>
            <person name="Weltjens I."/>
            <person name="Vanstreels E."/>
            <person name="Rieger M."/>
            <person name="Schaefer M."/>
            <person name="Mueller-Auer S."/>
            <person name="Gabel C."/>
            <person name="Fuchs M."/>
            <person name="Duesterhoeft A."/>
            <person name="Fritzc C."/>
            <person name="Holzer E."/>
            <person name="Moestl D."/>
            <person name="Hilbert H."/>
            <person name="Borzym K."/>
            <person name="Langer I."/>
            <person name="Beck A."/>
            <person name="Lehrach H."/>
            <person name="Reinhardt R."/>
            <person name="Pohl T.M."/>
            <person name="Eger P."/>
            <person name="Zimmermann W."/>
            <person name="Wedler H."/>
            <person name="Wambutt R."/>
            <person name="Purnelle B."/>
            <person name="Goffeau A."/>
            <person name="Cadieu E."/>
            <person name="Dreano S."/>
            <person name="Gloux S."/>
            <person name="Lelaure V."/>
            <person name="Mottier S."/>
            <person name="Galibert F."/>
            <person name="Aves S.J."/>
            <person name="Xiang Z."/>
            <person name="Hunt C."/>
            <person name="Moore K."/>
            <person name="Hurst S.M."/>
            <person name="Lucas M."/>
            <person name="Rochet M."/>
            <person name="Gaillardin C."/>
            <person name="Tallada V.A."/>
            <person name="Garzon A."/>
            <person name="Thode G."/>
            <person name="Daga R.R."/>
            <person name="Cruzado L."/>
            <person name="Jimenez J."/>
            <person name="Sanchez M."/>
            <person name="del Rey F."/>
            <person name="Benito J."/>
            <person name="Dominguez A."/>
            <person name="Revuelta J.L."/>
            <person name="Moreno S."/>
            <person name="Armstrong J."/>
            <person name="Forsburg S.L."/>
            <person name="Cerutti L."/>
            <person name="Lowe T."/>
            <person name="McCombie W.R."/>
            <person name="Paulsen I."/>
            <person name="Potashkin J."/>
            <person name="Shpakovski G.V."/>
            <person name="Ussery D."/>
            <person name="Barrell B.G."/>
            <person name="Nurse P."/>
        </authorList>
    </citation>
    <scope>NUCLEOTIDE SEQUENCE [LARGE SCALE GENOMIC DNA]</scope>
    <source>
        <strain>972 / ATCC 24843</strain>
    </source>
</reference>
<reference key="2">
    <citation type="journal article" date="2006" name="Nat. Biotechnol.">
        <title>ORFeome cloning and global analysis of protein localization in the fission yeast Schizosaccharomyces pombe.</title>
        <authorList>
            <person name="Matsuyama A."/>
            <person name="Arai R."/>
            <person name="Yashiroda Y."/>
            <person name="Shirai A."/>
            <person name="Kamata A."/>
            <person name="Sekido S."/>
            <person name="Kobayashi Y."/>
            <person name="Hashimoto A."/>
            <person name="Hamamoto M."/>
            <person name="Hiraoka Y."/>
            <person name="Horinouchi S."/>
            <person name="Yoshida M."/>
        </authorList>
    </citation>
    <scope>SUBCELLULAR LOCATION [LARGE SCALE ANALYSIS]</scope>
</reference>